<dbReference type="EC" id="3.1.1.8"/>
<dbReference type="EMBL" id="M99492">
    <property type="protein sequence ID" value="AAA37328.1"/>
    <property type="molecule type" value="mRNA"/>
</dbReference>
<dbReference type="EMBL" id="AK050337">
    <property type="protein sequence ID" value="BAC34196.1"/>
    <property type="molecule type" value="mRNA"/>
</dbReference>
<dbReference type="EMBL" id="CH466547">
    <property type="protein sequence ID" value="EDL15482.1"/>
    <property type="molecule type" value="Genomic_DNA"/>
</dbReference>
<dbReference type="CCDS" id="CCDS17411.1"/>
<dbReference type="PIR" id="S70849">
    <property type="entry name" value="S70849"/>
</dbReference>
<dbReference type="RefSeq" id="NP_033868.3">
    <property type="nucleotide sequence ID" value="NM_009738.4"/>
</dbReference>
<dbReference type="SMR" id="Q03311"/>
<dbReference type="BioGRID" id="198313">
    <property type="interactions" value="2"/>
</dbReference>
<dbReference type="CORUM" id="Q03311"/>
<dbReference type="FunCoup" id="Q03311">
    <property type="interactions" value="261"/>
</dbReference>
<dbReference type="STRING" id="10090.ENSMUSP00000029367"/>
<dbReference type="BindingDB" id="Q03311"/>
<dbReference type="ChEMBL" id="CHEMBL2528"/>
<dbReference type="DrugCentral" id="Q03311"/>
<dbReference type="ESTHER" id="mouse-BCHE">
    <property type="family name" value="BCHE"/>
</dbReference>
<dbReference type="MEROPS" id="S09.980"/>
<dbReference type="GlyCosmos" id="Q03311">
    <property type="glycosylation" value="7 sites, No reported glycans"/>
</dbReference>
<dbReference type="GlyGen" id="Q03311">
    <property type="glycosylation" value="8 sites, 3 N-linked glycans (3 sites), 1 O-linked glycan (1 site)"/>
</dbReference>
<dbReference type="iPTMnet" id="Q03311"/>
<dbReference type="PhosphoSitePlus" id="Q03311"/>
<dbReference type="SwissPalm" id="Q03311"/>
<dbReference type="CPTAC" id="non-CPTAC-3902"/>
<dbReference type="jPOST" id="Q03311"/>
<dbReference type="PaxDb" id="10090-ENSMUSP00000029367"/>
<dbReference type="PeptideAtlas" id="Q03311"/>
<dbReference type="ProteomicsDB" id="283908"/>
<dbReference type="Antibodypedia" id="879">
    <property type="antibodies" value="450 antibodies from 41 providers"/>
</dbReference>
<dbReference type="DNASU" id="12038"/>
<dbReference type="Ensembl" id="ENSMUST00000029367.6">
    <property type="protein sequence ID" value="ENSMUSP00000029367.6"/>
    <property type="gene ID" value="ENSMUSG00000027792.12"/>
</dbReference>
<dbReference type="GeneID" id="12038"/>
<dbReference type="KEGG" id="mmu:12038"/>
<dbReference type="UCSC" id="uc008pmv.1">
    <property type="organism name" value="mouse"/>
</dbReference>
<dbReference type="AGR" id="MGI:894278"/>
<dbReference type="CTD" id="590"/>
<dbReference type="MGI" id="MGI:894278">
    <property type="gene designation" value="Bche"/>
</dbReference>
<dbReference type="VEuPathDB" id="HostDB:ENSMUSG00000027792"/>
<dbReference type="eggNOG" id="KOG4389">
    <property type="taxonomic scope" value="Eukaryota"/>
</dbReference>
<dbReference type="GeneTree" id="ENSGT00940000157023"/>
<dbReference type="HOGENOM" id="CLU_006586_13_0_1"/>
<dbReference type="InParanoid" id="Q03311"/>
<dbReference type="OMA" id="YICPGID"/>
<dbReference type="OrthoDB" id="9000293at2759"/>
<dbReference type="PhylomeDB" id="Q03311"/>
<dbReference type="TreeFam" id="TF315470"/>
<dbReference type="Reactome" id="R-MMU-422085">
    <property type="pathway name" value="Synthesis, secretion, and deacylation of Ghrelin"/>
</dbReference>
<dbReference type="Reactome" id="R-MMU-9749641">
    <property type="pathway name" value="Aspirin ADME"/>
</dbReference>
<dbReference type="SABIO-RK" id="Q03311"/>
<dbReference type="BioGRID-ORCS" id="12038">
    <property type="hits" value="3 hits in 77 CRISPR screens"/>
</dbReference>
<dbReference type="PRO" id="PR:Q03311"/>
<dbReference type="Proteomes" id="UP000000589">
    <property type="component" value="Chromosome 3"/>
</dbReference>
<dbReference type="RNAct" id="Q03311">
    <property type="molecule type" value="protein"/>
</dbReference>
<dbReference type="Bgee" id="ENSMUSG00000027792">
    <property type="expression patterns" value="Expressed in duodenum and 164 other cell types or tissues"/>
</dbReference>
<dbReference type="ExpressionAtlas" id="Q03311">
    <property type="expression patterns" value="baseline and differential"/>
</dbReference>
<dbReference type="GO" id="GO:0005783">
    <property type="term" value="C:endoplasmic reticulum"/>
    <property type="evidence" value="ECO:0000314"/>
    <property type="project" value="MGI"/>
</dbReference>
<dbReference type="GO" id="GO:0005788">
    <property type="term" value="C:endoplasmic reticulum lumen"/>
    <property type="evidence" value="ECO:0007669"/>
    <property type="project" value="Ensembl"/>
</dbReference>
<dbReference type="GO" id="GO:0005615">
    <property type="term" value="C:extracellular space"/>
    <property type="evidence" value="ECO:0007669"/>
    <property type="project" value="Ensembl"/>
</dbReference>
<dbReference type="GO" id="GO:0005641">
    <property type="term" value="C:nuclear envelope lumen"/>
    <property type="evidence" value="ECO:0000314"/>
    <property type="project" value="MGI"/>
</dbReference>
<dbReference type="GO" id="GO:0003990">
    <property type="term" value="F:acetylcholinesterase activity"/>
    <property type="evidence" value="ECO:0000314"/>
    <property type="project" value="UniProtKB"/>
</dbReference>
<dbReference type="GO" id="GO:0033265">
    <property type="term" value="F:choline binding"/>
    <property type="evidence" value="ECO:0007669"/>
    <property type="project" value="Ensembl"/>
</dbReference>
<dbReference type="GO" id="GO:0004104">
    <property type="term" value="F:cholinesterase activity"/>
    <property type="evidence" value="ECO:0000250"/>
    <property type="project" value="UniProtKB"/>
</dbReference>
<dbReference type="GO" id="GO:0042802">
    <property type="term" value="F:identical protein binding"/>
    <property type="evidence" value="ECO:0007669"/>
    <property type="project" value="Ensembl"/>
</dbReference>
<dbReference type="GO" id="GO:0019695">
    <property type="term" value="P:choline metabolic process"/>
    <property type="evidence" value="ECO:0007669"/>
    <property type="project" value="Ensembl"/>
</dbReference>
<dbReference type="GO" id="GO:0007612">
    <property type="term" value="P:learning"/>
    <property type="evidence" value="ECO:0007669"/>
    <property type="project" value="Ensembl"/>
</dbReference>
<dbReference type="GO" id="GO:0008285">
    <property type="term" value="P:negative regulation of cell population proliferation"/>
    <property type="evidence" value="ECO:0007669"/>
    <property type="project" value="Ensembl"/>
</dbReference>
<dbReference type="GO" id="GO:0050805">
    <property type="term" value="P:negative regulation of synaptic transmission"/>
    <property type="evidence" value="ECO:0007669"/>
    <property type="project" value="Ensembl"/>
</dbReference>
<dbReference type="GO" id="GO:0014016">
    <property type="term" value="P:neuroblast differentiation"/>
    <property type="evidence" value="ECO:0007669"/>
    <property type="project" value="Ensembl"/>
</dbReference>
<dbReference type="GO" id="GO:0043279">
    <property type="term" value="P:response to alkaloid"/>
    <property type="evidence" value="ECO:0007669"/>
    <property type="project" value="Ensembl"/>
</dbReference>
<dbReference type="GO" id="GO:0051593">
    <property type="term" value="P:response to folic acid"/>
    <property type="evidence" value="ECO:0007669"/>
    <property type="project" value="Ensembl"/>
</dbReference>
<dbReference type="GO" id="GO:0051384">
    <property type="term" value="P:response to glucocorticoid"/>
    <property type="evidence" value="ECO:0007669"/>
    <property type="project" value="Ensembl"/>
</dbReference>
<dbReference type="GO" id="GO:0009410">
    <property type="term" value="P:response to xenobiotic stimulus"/>
    <property type="evidence" value="ECO:0007669"/>
    <property type="project" value="Ensembl"/>
</dbReference>
<dbReference type="CDD" id="cd00312">
    <property type="entry name" value="Esterase_lipase"/>
    <property type="match status" value="1"/>
</dbReference>
<dbReference type="FunFam" id="3.40.50.1820:FF:000029">
    <property type="entry name" value="Acetylcholinesterase"/>
    <property type="match status" value="1"/>
</dbReference>
<dbReference type="Gene3D" id="3.40.50.1820">
    <property type="entry name" value="alpha/beta hydrolase"/>
    <property type="match status" value="1"/>
</dbReference>
<dbReference type="InterPro" id="IPR029058">
    <property type="entry name" value="AB_hydrolase_fold"/>
</dbReference>
<dbReference type="InterPro" id="IPR050654">
    <property type="entry name" value="AChE-related_enzymes"/>
</dbReference>
<dbReference type="InterPro" id="IPR014788">
    <property type="entry name" value="AChE_tetra"/>
</dbReference>
<dbReference type="InterPro" id="IPR002018">
    <property type="entry name" value="CarbesteraseB"/>
</dbReference>
<dbReference type="InterPro" id="IPR019826">
    <property type="entry name" value="Carboxylesterase_B_AS"/>
</dbReference>
<dbReference type="InterPro" id="IPR019819">
    <property type="entry name" value="Carboxylesterase_B_CS"/>
</dbReference>
<dbReference type="InterPro" id="IPR000997">
    <property type="entry name" value="Cholinesterase"/>
</dbReference>
<dbReference type="PANTHER" id="PTHR43918">
    <property type="entry name" value="ACETYLCHOLINESTERASE"/>
    <property type="match status" value="1"/>
</dbReference>
<dbReference type="PANTHER" id="PTHR43918:SF5">
    <property type="entry name" value="CHOLINESTERASE"/>
    <property type="match status" value="1"/>
</dbReference>
<dbReference type="Pfam" id="PF08674">
    <property type="entry name" value="AChE_tetra"/>
    <property type="match status" value="1"/>
</dbReference>
<dbReference type="Pfam" id="PF00135">
    <property type="entry name" value="COesterase"/>
    <property type="match status" value="1"/>
</dbReference>
<dbReference type="PRINTS" id="PR00878">
    <property type="entry name" value="CHOLNESTRASE"/>
</dbReference>
<dbReference type="SUPFAM" id="SSF53474">
    <property type="entry name" value="alpha/beta-Hydrolases"/>
    <property type="match status" value="1"/>
</dbReference>
<dbReference type="PROSITE" id="PS00122">
    <property type="entry name" value="CARBOXYLESTERASE_B_1"/>
    <property type="match status" value="1"/>
</dbReference>
<dbReference type="PROSITE" id="PS00941">
    <property type="entry name" value="CARBOXYLESTERASE_B_2"/>
    <property type="match status" value="1"/>
</dbReference>
<feature type="signal peptide">
    <location>
        <begin position="1"/>
        <end position="29"/>
    </location>
</feature>
<feature type="chain" id="PRO_0000008614" description="Cholinesterase">
    <location>
        <begin position="30"/>
        <end position="603"/>
    </location>
</feature>
<feature type="active site" description="Acyl-ester intermediate" evidence="4">
    <location>
        <position position="227"/>
    </location>
</feature>
<feature type="active site" description="Charge relay system" evidence="1">
    <location>
        <position position="354"/>
    </location>
</feature>
<feature type="active site" description="Charge relay system" evidence="1">
    <location>
        <position position="467"/>
    </location>
</feature>
<feature type="binding site" evidence="1">
    <location>
        <begin position="145"/>
        <end position="146"/>
    </location>
    <ligand>
        <name>substrate</name>
    </ligand>
</feature>
<feature type="modified residue" description="Phosphoserine" evidence="2">
    <location>
        <position position="227"/>
    </location>
</feature>
<feature type="glycosylation site" description="N-linked (GlcNAc...) asparagine" evidence="3">
    <location>
        <position position="86"/>
    </location>
</feature>
<feature type="glycosylation site" description="N-linked (GlcNAc...) asparagine" evidence="3">
    <location>
        <position position="135"/>
    </location>
</feature>
<feature type="glycosylation site" description="N-linked (GlcNAc...) asparagine" evidence="3">
    <location>
        <position position="270"/>
    </location>
</feature>
<feature type="glycosylation site" description="N-linked (GlcNAc...) asparagine" evidence="3">
    <location>
        <position position="370"/>
    </location>
</feature>
<feature type="glycosylation site" description="N-linked (GlcNAc...) asparagine" evidence="3">
    <location>
        <position position="484"/>
    </location>
</feature>
<feature type="glycosylation site" description="N-linked (GlcNAc...) asparagine" evidence="3">
    <location>
        <position position="510"/>
    </location>
</feature>
<feature type="glycosylation site" description="N-linked (GlcNAc...) asparagine" evidence="3">
    <location>
        <position position="515"/>
    </location>
</feature>
<feature type="disulfide bond" evidence="1">
    <location>
        <begin position="94"/>
        <end position="121"/>
    </location>
</feature>
<feature type="disulfide bond" evidence="1">
    <location>
        <begin position="281"/>
        <end position="292"/>
    </location>
</feature>
<feature type="disulfide bond" evidence="1">
    <location>
        <begin position="429"/>
        <end position="548"/>
    </location>
</feature>
<feature type="disulfide bond" description="Interchain" evidence="1">
    <location>
        <position position="600"/>
    </location>
</feature>
<feature type="sequence conflict" description="In Ref. 1; AAA37328." evidence="9" ref="1">
    <original>P</original>
    <variation>R</variation>
    <location>
        <position position="129"/>
    </location>
</feature>
<sequence length="603" mass="68462">MQTQHTKVTQTHFLLWILLLCMPFGKSHTEEDFIITTKTGRVRGLSMPVLGGTVTAFLGIPYAQPPLGSLRFKKPQPLNKWPDIHNATQYANSCYQNIDQAFPGFQGSEMWNPNTNLSEDCLYLNVWIPVPKPKNATVMVWIYGGGFQTGTSSLPVYDGKFLARVERVIVVSMNYRVGALGFLAFPGNPDAPGNMGLFDQQLALQWVQRNIAAFGGNPKSITIFGESAGAASVSLHLLCPQSYPLFTRAILESGSSNAPWAVKHPEEARNRTLTLAKFTGCSKENEMEMIKCLRSKDPQEILRNERFVLPSDSILSINFGPTVDGDFLTDMPHTLLQLGKVKKAQILVGVNKDEGTAFLVYGAPGFSKDNDSLITRKEFQEGLNMYFPGVSRLGKEAVLFYYVDWLGEQSPEVYRDALDDVIGDYNIICPALEFTKKFAELENNAFFYFFEHRSSKLPWPEWMGVMHGYEIEFVFGLPLGRRVNYTRAEEIFSRSIMKTWANFAKYGHPNGTQGNSTMWPVFTSTEQKYLTLNTEKSKIYSKLRAPQCQFWRLFFPKVLEMTGDIDETEQEWKAGFHRWSNYMMDWQNQFNDYTSKKESCTAL</sequence>
<reference key="1">
    <citation type="journal article" date="1990" name="Neuron">
        <title>Molecular cloning of mouse acetylcholinesterase: tissue distribution of alternatively spliced mRNA species.</title>
        <authorList>
            <person name="Rachinsky T.L."/>
            <person name="Camp S."/>
            <person name="Li Y."/>
            <person name="Ekstroem T.J."/>
            <person name="Newton M."/>
            <person name="Taylor P."/>
        </authorList>
    </citation>
    <scope>NUCLEOTIDE SEQUENCE [MRNA]</scope>
</reference>
<reference key="2">
    <citation type="journal article" date="2005" name="Science">
        <title>The transcriptional landscape of the mammalian genome.</title>
        <authorList>
            <person name="Carninci P."/>
            <person name="Kasukawa T."/>
            <person name="Katayama S."/>
            <person name="Gough J."/>
            <person name="Frith M.C."/>
            <person name="Maeda N."/>
            <person name="Oyama R."/>
            <person name="Ravasi T."/>
            <person name="Lenhard B."/>
            <person name="Wells C."/>
            <person name="Kodzius R."/>
            <person name="Shimokawa K."/>
            <person name="Bajic V.B."/>
            <person name="Brenner S.E."/>
            <person name="Batalov S."/>
            <person name="Forrest A.R."/>
            <person name="Zavolan M."/>
            <person name="Davis M.J."/>
            <person name="Wilming L.G."/>
            <person name="Aidinis V."/>
            <person name="Allen J.E."/>
            <person name="Ambesi-Impiombato A."/>
            <person name="Apweiler R."/>
            <person name="Aturaliya R.N."/>
            <person name="Bailey T.L."/>
            <person name="Bansal M."/>
            <person name="Baxter L."/>
            <person name="Beisel K.W."/>
            <person name="Bersano T."/>
            <person name="Bono H."/>
            <person name="Chalk A.M."/>
            <person name="Chiu K.P."/>
            <person name="Choudhary V."/>
            <person name="Christoffels A."/>
            <person name="Clutterbuck D.R."/>
            <person name="Crowe M.L."/>
            <person name="Dalla E."/>
            <person name="Dalrymple B.P."/>
            <person name="de Bono B."/>
            <person name="Della Gatta G."/>
            <person name="di Bernardo D."/>
            <person name="Down T."/>
            <person name="Engstrom P."/>
            <person name="Fagiolini M."/>
            <person name="Faulkner G."/>
            <person name="Fletcher C.F."/>
            <person name="Fukushima T."/>
            <person name="Furuno M."/>
            <person name="Futaki S."/>
            <person name="Gariboldi M."/>
            <person name="Georgii-Hemming P."/>
            <person name="Gingeras T.R."/>
            <person name="Gojobori T."/>
            <person name="Green R.E."/>
            <person name="Gustincich S."/>
            <person name="Harbers M."/>
            <person name="Hayashi Y."/>
            <person name="Hensch T.K."/>
            <person name="Hirokawa N."/>
            <person name="Hill D."/>
            <person name="Huminiecki L."/>
            <person name="Iacono M."/>
            <person name="Ikeo K."/>
            <person name="Iwama A."/>
            <person name="Ishikawa T."/>
            <person name="Jakt M."/>
            <person name="Kanapin A."/>
            <person name="Katoh M."/>
            <person name="Kawasawa Y."/>
            <person name="Kelso J."/>
            <person name="Kitamura H."/>
            <person name="Kitano H."/>
            <person name="Kollias G."/>
            <person name="Krishnan S.P."/>
            <person name="Kruger A."/>
            <person name="Kummerfeld S.K."/>
            <person name="Kurochkin I.V."/>
            <person name="Lareau L.F."/>
            <person name="Lazarevic D."/>
            <person name="Lipovich L."/>
            <person name="Liu J."/>
            <person name="Liuni S."/>
            <person name="McWilliam S."/>
            <person name="Madan Babu M."/>
            <person name="Madera M."/>
            <person name="Marchionni L."/>
            <person name="Matsuda H."/>
            <person name="Matsuzawa S."/>
            <person name="Miki H."/>
            <person name="Mignone F."/>
            <person name="Miyake S."/>
            <person name="Morris K."/>
            <person name="Mottagui-Tabar S."/>
            <person name="Mulder N."/>
            <person name="Nakano N."/>
            <person name="Nakauchi H."/>
            <person name="Ng P."/>
            <person name="Nilsson R."/>
            <person name="Nishiguchi S."/>
            <person name="Nishikawa S."/>
            <person name="Nori F."/>
            <person name="Ohara O."/>
            <person name="Okazaki Y."/>
            <person name="Orlando V."/>
            <person name="Pang K.C."/>
            <person name="Pavan W.J."/>
            <person name="Pavesi G."/>
            <person name="Pesole G."/>
            <person name="Petrovsky N."/>
            <person name="Piazza S."/>
            <person name="Reed J."/>
            <person name="Reid J.F."/>
            <person name="Ring B.Z."/>
            <person name="Ringwald M."/>
            <person name="Rost B."/>
            <person name="Ruan Y."/>
            <person name="Salzberg S.L."/>
            <person name="Sandelin A."/>
            <person name="Schneider C."/>
            <person name="Schoenbach C."/>
            <person name="Sekiguchi K."/>
            <person name="Semple C.A."/>
            <person name="Seno S."/>
            <person name="Sessa L."/>
            <person name="Sheng Y."/>
            <person name="Shibata Y."/>
            <person name="Shimada H."/>
            <person name="Shimada K."/>
            <person name="Silva D."/>
            <person name="Sinclair B."/>
            <person name="Sperling S."/>
            <person name="Stupka E."/>
            <person name="Sugiura K."/>
            <person name="Sultana R."/>
            <person name="Takenaka Y."/>
            <person name="Taki K."/>
            <person name="Tammoja K."/>
            <person name="Tan S.L."/>
            <person name="Tang S."/>
            <person name="Taylor M.S."/>
            <person name="Tegner J."/>
            <person name="Teichmann S.A."/>
            <person name="Ueda H.R."/>
            <person name="van Nimwegen E."/>
            <person name="Verardo R."/>
            <person name="Wei C.L."/>
            <person name="Yagi K."/>
            <person name="Yamanishi H."/>
            <person name="Zabarovsky E."/>
            <person name="Zhu S."/>
            <person name="Zimmer A."/>
            <person name="Hide W."/>
            <person name="Bult C."/>
            <person name="Grimmond S.M."/>
            <person name="Teasdale R.D."/>
            <person name="Liu E.T."/>
            <person name="Brusic V."/>
            <person name="Quackenbush J."/>
            <person name="Wahlestedt C."/>
            <person name="Mattick J.S."/>
            <person name="Hume D.A."/>
            <person name="Kai C."/>
            <person name="Sasaki D."/>
            <person name="Tomaru Y."/>
            <person name="Fukuda S."/>
            <person name="Kanamori-Katayama M."/>
            <person name="Suzuki M."/>
            <person name="Aoki J."/>
            <person name="Arakawa T."/>
            <person name="Iida J."/>
            <person name="Imamura K."/>
            <person name="Itoh M."/>
            <person name="Kato T."/>
            <person name="Kawaji H."/>
            <person name="Kawagashira N."/>
            <person name="Kawashima T."/>
            <person name="Kojima M."/>
            <person name="Kondo S."/>
            <person name="Konno H."/>
            <person name="Nakano K."/>
            <person name="Ninomiya N."/>
            <person name="Nishio T."/>
            <person name="Okada M."/>
            <person name="Plessy C."/>
            <person name="Shibata K."/>
            <person name="Shiraki T."/>
            <person name="Suzuki S."/>
            <person name="Tagami M."/>
            <person name="Waki K."/>
            <person name="Watahiki A."/>
            <person name="Okamura-Oho Y."/>
            <person name="Suzuki H."/>
            <person name="Kawai J."/>
            <person name="Hayashizaki Y."/>
        </authorList>
    </citation>
    <scope>NUCLEOTIDE SEQUENCE [LARGE SCALE MRNA]</scope>
    <source>
        <strain>C57BL/6J</strain>
        <tissue>Liver</tissue>
    </source>
</reference>
<reference key="3">
    <citation type="submission" date="2005-09" db="EMBL/GenBank/DDBJ databases">
        <authorList>
            <person name="Mural R.J."/>
            <person name="Adams M.D."/>
            <person name="Myers E.W."/>
            <person name="Smith H.O."/>
            <person name="Venter J.C."/>
        </authorList>
    </citation>
    <scope>NUCLEOTIDE SEQUENCE [LARGE SCALE GENOMIC DNA]</scope>
</reference>
<reference key="4">
    <citation type="journal article" date="1991" name="J. Biol. Chem.">
        <title>Use of the polymerase chain reaction for homology probing of butyrylcholinesterase from several vertebrates.</title>
        <authorList>
            <person name="Arpagaus M."/>
            <person name="Chatonnet A."/>
            <person name="Masson P."/>
            <person name="Newton M."/>
            <person name="Vaughan T.A."/>
            <person name="Bartels C.F."/>
            <person name="Nogueira C.P."/>
            <person name="la Du B.N."/>
            <person name="Lockridge O."/>
        </authorList>
    </citation>
    <scope>NUCLEOTIDE SEQUENCE [MRNA] OF 97-237</scope>
    <source>
        <tissue>Liver</tissue>
    </source>
</reference>
<reference key="5">
    <citation type="journal article" date="2007" name="J. Neurochem.">
        <title>Excessive hippocampal acetylcholine levels in acetylcholinesterase-deficient mice are moderated by butyrylcholinesterase activity.</title>
        <authorList>
            <person name="Hartmann J."/>
            <person name="Kiewert C."/>
            <person name="Duysen E.G."/>
            <person name="Lockridge O."/>
            <person name="Greig N.H."/>
            <person name="Klein J."/>
        </authorList>
    </citation>
    <scope>FUNCTION</scope>
</reference>
<reference key="6">
    <citation type="journal article" date="2007" name="Life Sci.">
        <title>Butyrylcholinesterase and the control of synaptic responses in acetylcholinesterase knockout mice.</title>
        <authorList>
            <person name="Girard E."/>
            <person name="Bernard V."/>
            <person name="Minic J."/>
            <person name="Chatonnet A."/>
            <person name="Krejci E."/>
            <person name="Molgo J."/>
        </authorList>
    </citation>
    <scope>FUNCTION</scope>
</reference>
<reference key="7">
    <citation type="journal article" date="2007" name="Toxicology">
        <title>Sensitivity of butyrylcholinesterase knockout mice to (--)-huperzine A and donepezil suggests humans with butyrylcholinesterase deficiency may not tolerate these Alzheimer's disease drugs and indicates butyrylcholinesterase function in neurotransmission.</title>
        <authorList>
            <person name="Duysen E.G."/>
            <person name="Li B."/>
            <person name="Darvesh S."/>
            <person name="Lockridge O."/>
        </authorList>
    </citation>
    <scope>DISRUPTION PHENOTYPE</scope>
</reference>
<reference key="8">
    <citation type="journal article" date="2008" name="J. Pharmacol. Exp. Ther.">
        <title>The butyrylcholinesterase knockout mouse as a model for human butyrylcholinesterase deficiency.</title>
        <authorList>
            <person name="Li B."/>
            <person name="Duysen E.G."/>
            <person name="Carlson M."/>
            <person name="Lockridge O."/>
        </authorList>
    </citation>
    <scope>DISRUPTION PHENOTYPE</scope>
</reference>
<reference key="9">
    <citation type="journal article" date="2010" name="Cell">
        <title>A tissue-specific atlas of mouse protein phosphorylation and expression.</title>
        <authorList>
            <person name="Huttlin E.L."/>
            <person name="Jedrychowski M.P."/>
            <person name="Elias J.E."/>
            <person name="Goswami T."/>
            <person name="Rad R."/>
            <person name="Beausoleil S.A."/>
            <person name="Villen J."/>
            <person name="Haas W."/>
            <person name="Sowa M.E."/>
            <person name="Gygi S.P."/>
        </authorList>
    </citation>
    <scope>IDENTIFICATION BY MASS SPECTROMETRY [LARGE SCALE ANALYSIS]</scope>
    <source>
        <tissue>Brown adipose tissue</tissue>
        <tissue>Heart</tissue>
        <tissue>Liver</tissue>
        <tissue>Lung</tissue>
    </source>
</reference>
<keyword id="KW-1015">Disulfide bond</keyword>
<keyword id="KW-0325">Glycoprotein</keyword>
<keyword id="KW-0378">Hydrolase</keyword>
<keyword id="KW-0597">Phosphoprotein</keyword>
<keyword id="KW-1185">Reference proteome</keyword>
<keyword id="KW-0964">Secreted</keyword>
<keyword id="KW-0719">Serine esterase</keyword>
<keyword id="KW-0732">Signal</keyword>
<name>CHLE_MOUSE</name>
<organism>
    <name type="scientific">Mus musculus</name>
    <name type="common">Mouse</name>
    <dbReference type="NCBI Taxonomy" id="10090"/>
    <lineage>
        <taxon>Eukaryota</taxon>
        <taxon>Metazoa</taxon>
        <taxon>Chordata</taxon>
        <taxon>Craniata</taxon>
        <taxon>Vertebrata</taxon>
        <taxon>Euteleostomi</taxon>
        <taxon>Mammalia</taxon>
        <taxon>Eutheria</taxon>
        <taxon>Euarchontoglires</taxon>
        <taxon>Glires</taxon>
        <taxon>Rodentia</taxon>
        <taxon>Myomorpha</taxon>
        <taxon>Muroidea</taxon>
        <taxon>Muridae</taxon>
        <taxon>Murinae</taxon>
        <taxon>Mus</taxon>
        <taxon>Mus</taxon>
    </lineage>
</organism>
<comment type="function">
    <text evidence="6 7">Esterase with broad substrate specificity. Contributes to the inactivation of the neurotransmitter acetylcholine. Can degrade neurotoxic organophosphate esters.</text>
</comment>
<comment type="catalytic activity">
    <reaction>
        <text>an acylcholine + H2O = a carboxylate + choline + H(+)</text>
        <dbReference type="Rhea" id="RHEA:21964"/>
        <dbReference type="ChEBI" id="CHEBI:15354"/>
        <dbReference type="ChEBI" id="CHEBI:15377"/>
        <dbReference type="ChEBI" id="CHEBI:15378"/>
        <dbReference type="ChEBI" id="CHEBI:29067"/>
        <dbReference type="ChEBI" id="CHEBI:35287"/>
        <dbReference type="EC" id="3.1.1.8"/>
    </reaction>
</comment>
<comment type="subunit">
    <text evidence="1">Homotetramer; disulfide-linked. Dimer of dimers (By similarity).</text>
</comment>
<comment type="subcellular location">
    <subcellularLocation>
        <location evidence="1">Secreted</location>
    </subcellularLocation>
</comment>
<comment type="tissue specificity">
    <text>Present in most cells except erythrocytes.</text>
</comment>
<comment type="disruption phenotype">
    <text evidence="5 8">No visible phenotype; due to the presence of other cholinesterases. Hypersensitive to acetylcholinesterase inhibitors, such as huperzine and donepezil. Treatment with the acetylcholinesterase inhibitor donepezil causes convulsions and death within 3 hours of dosing.</text>
</comment>
<comment type="similarity">
    <text evidence="9">Belongs to the type-B carboxylesterase/lipase family.</text>
</comment>
<protein>
    <recommendedName>
        <fullName>Cholinesterase</fullName>
        <ecNumber>3.1.1.8</ecNumber>
    </recommendedName>
    <alternativeName>
        <fullName>Acylcholine acylhydrolase</fullName>
    </alternativeName>
    <alternativeName>
        <fullName>Butyrylcholine esterase</fullName>
    </alternativeName>
    <alternativeName>
        <fullName>Choline esterase II</fullName>
    </alternativeName>
    <alternativeName>
        <fullName>Pseudocholinesterase</fullName>
    </alternativeName>
</protein>
<accession>Q03311</accession>
<accession>Q543J3</accession>
<proteinExistence type="evidence at protein level"/>
<gene>
    <name type="primary">Bche</name>
</gene>
<evidence type="ECO:0000250" key="1"/>
<evidence type="ECO:0000250" key="2">
    <source>
        <dbReference type="UniProtKB" id="P06276"/>
    </source>
</evidence>
<evidence type="ECO:0000255" key="3"/>
<evidence type="ECO:0000255" key="4">
    <source>
        <dbReference type="PROSITE-ProRule" id="PRU10039"/>
    </source>
</evidence>
<evidence type="ECO:0000269" key="5">
    <source>
    </source>
</evidence>
<evidence type="ECO:0000269" key="6">
    <source>
    </source>
</evidence>
<evidence type="ECO:0000269" key="7">
    <source>
    </source>
</evidence>
<evidence type="ECO:0000269" key="8">
    <source>
    </source>
</evidence>
<evidence type="ECO:0000305" key="9"/>